<accession>C0QJG7</accession>
<dbReference type="EC" id="2.5.1.-" evidence="1"/>
<dbReference type="EMBL" id="CP001087">
    <property type="protein sequence ID" value="ACN15980.1"/>
    <property type="molecule type" value="Genomic_DNA"/>
</dbReference>
<dbReference type="RefSeq" id="WP_015904742.1">
    <property type="nucleotide sequence ID" value="NC_012108.1"/>
</dbReference>
<dbReference type="SMR" id="C0QJG7"/>
<dbReference type="STRING" id="177437.HRM2_28920"/>
<dbReference type="KEGG" id="dat:HRM2_28920"/>
<dbReference type="eggNOG" id="COG0500">
    <property type="taxonomic scope" value="Bacteria"/>
</dbReference>
<dbReference type="HOGENOM" id="CLU_052665_0_0_7"/>
<dbReference type="OrthoDB" id="9765084at2"/>
<dbReference type="Proteomes" id="UP000000442">
    <property type="component" value="Chromosome"/>
</dbReference>
<dbReference type="GO" id="GO:0016765">
    <property type="term" value="F:transferase activity, transferring alkyl or aryl (other than methyl) groups"/>
    <property type="evidence" value="ECO:0007669"/>
    <property type="project" value="InterPro"/>
</dbReference>
<dbReference type="GO" id="GO:0002098">
    <property type="term" value="P:tRNA wobble uridine modification"/>
    <property type="evidence" value="ECO:0007669"/>
    <property type="project" value="InterPro"/>
</dbReference>
<dbReference type="CDD" id="cd02440">
    <property type="entry name" value="AdoMet_MTases"/>
    <property type="match status" value="1"/>
</dbReference>
<dbReference type="Gene3D" id="3.40.50.150">
    <property type="entry name" value="Vaccinia Virus protein VP39"/>
    <property type="match status" value="1"/>
</dbReference>
<dbReference type="HAMAP" id="MF_01590">
    <property type="entry name" value="tRNA_carboxymethyltr_CmoB"/>
    <property type="match status" value="1"/>
</dbReference>
<dbReference type="InterPro" id="IPR010017">
    <property type="entry name" value="CmoB"/>
</dbReference>
<dbReference type="InterPro" id="IPR027555">
    <property type="entry name" value="Mo5U34_MeTrfas-like"/>
</dbReference>
<dbReference type="InterPro" id="IPR029063">
    <property type="entry name" value="SAM-dependent_MTases_sf"/>
</dbReference>
<dbReference type="NCBIfam" id="NF011650">
    <property type="entry name" value="PRK15068.1"/>
    <property type="match status" value="1"/>
</dbReference>
<dbReference type="NCBIfam" id="TIGR00452">
    <property type="entry name" value="tRNA 5-methoxyuridine(34)/uridine 5-oxyacetic acid(34) synthase CmoB"/>
    <property type="match status" value="1"/>
</dbReference>
<dbReference type="Pfam" id="PF08003">
    <property type="entry name" value="Methyltransf_9"/>
    <property type="match status" value="1"/>
</dbReference>
<dbReference type="SUPFAM" id="SSF53335">
    <property type="entry name" value="S-adenosyl-L-methionine-dependent methyltransferases"/>
    <property type="match status" value="1"/>
</dbReference>
<organism>
    <name type="scientific">Desulforapulum autotrophicum (strain ATCC 43914 / DSM 3382 / VKM B-1955 / HRM2)</name>
    <name type="common">Desulfobacterium autotrophicum</name>
    <dbReference type="NCBI Taxonomy" id="177437"/>
    <lineage>
        <taxon>Bacteria</taxon>
        <taxon>Pseudomonadati</taxon>
        <taxon>Thermodesulfobacteriota</taxon>
        <taxon>Desulfobacteria</taxon>
        <taxon>Desulfobacterales</taxon>
        <taxon>Desulfobacteraceae</taxon>
        <taxon>Desulforapulum</taxon>
    </lineage>
</organism>
<gene>
    <name evidence="1" type="primary">cmoB</name>
    <name type="ordered locus">HRM2_28920</name>
</gene>
<feature type="chain" id="PRO_0000381855" description="tRNA U34 carboxymethyltransferase">
    <location>
        <begin position="1"/>
        <end position="325"/>
    </location>
</feature>
<feature type="binding site" evidence="1">
    <location>
        <position position="93"/>
    </location>
    <ligand>
        <name>carboxy-S-adenosyl-L-methionine</name>
        <dbReference type="ChEBI" id="CHEBI:134278"/>
    </ligand>
</feature>
<feature type="binding site" evidence="1">
    <location>
        <position position="107"/>
    </location>
    <ligand>
        <name>carboxy-S-adenosyl-L-methionine</name>
        <dbReference type="ChEBI" id="CHEBI:134278"/>
    </ligand>
</feature>
<feature type="binding site" evidence="1">
    <location>
        <position position="112"/>
    </location>
    <ligand>
        <name>carboxy-S-adenosyl-L-methionine</name>
        <dbReference type="ChEBI" id="CHEBI:134278"/>
    </ligand>
</feature>
<feature type="binding site" evidence="1">
    <location>
        <position position="132"/>
    </location>
    <ligand>
        <name>carboxy-S-adenosyl-L-methionine</name>
        <dbReference type="ChEBI" id="CHEBI:134278"/>
    </ligand>
</feature>
<feature type="binding site" evidence="1">
    <location>
        <position position="198"/>
    </location>
    <ligand>
        <name>carboxy-S-adenosyl-L-methionine</name>
        <dbReference type="ChEBI" id="CHEBI:134278"/>
    </ligand>
</feature>
<feature type="binding site" evidence="1">
    <location>
        <position position="202"/>
    </location>
    <ligand>
        <name>carboxy-S-adenosyl-L-methionine</name>
        <dbReference type="ChEBI" id="CHEBI:134278"/>
    </ligand>
</feature>
<feature type="binding site" evidence="1">
    <location>
        <position position="317"/>
    </location>
    <ligand>
        <name>carboxy-S-adenosyl-L-methionine</name>
        <dbReference type="ChEBI" id="CHEBI:134278"/>
    </ligand>
</feature>
<reference key="1">
    <citation type="journal article" date="2009" name="Environ. Microbiol.">
        <title>Genome sequence of Desulfobacterium autotrophicum HRM2, a marine sulfate reducer oxidizing organic carbon completely to carbon dioxide.</title>
        <authorList>
            <person name="Strittmatter A.W."/>
            <person name="Liesegang H."/>
            <person name="Rabus R."/>
            <person name="Decker I."/>
            <person name="Amann J."/>
            <person name="Andres S."/>
            <person name="Henne A."/>
            <person name="Fricke W.F."/>
            <person name="Martinez-Arias R."/>
            <person name="Bartels D."/>
            <person name="Goesmann A."/>
            <person name="Krause L."/>
            <person name="Puehler A."/>
            <person name="Klenk H.P."/>
            <person name="Richter M."/>
            <person name="Schuler M."/>
            <person name="Gloeckner F.O."/>
            <person name="Meyerdierks A."/>
            <person name="Gottschalk G."/>
            <person name="Amann R."/>
        </authorList>
    </citation>
    <scope>NUCLEOTIDE SEQUENCE [LARGE SCALE GENOMIC DNA]</scope>
    <source>
        <strain>ATCC 43914 / DSM 3382 / VKM B-1955 / HRM2</strain>
    </source>
</reference>
<sequence>MNRTDLFKGYERLESQFELQGIDGMLTALAPVFDHPRGNTLKYTKALEGLPETIASIVDLDRDAPRVGVDSDLSFGQHQQLYQSLFQLCPWRKGPFEFFGIDLDAEWQSNIKWDRFAGRISALTHRRVLDIGSSNGYYMFRMASQKPRLVLGLEPQHTFYFQFHAVNQYAGQANLFALPIAFDAMPVTRGFFDTVFCMGVLYHRRSPLGMLRKIHDMMQIGGELVLENLVLESREDLCLFPEDRYAKMRNVFFIPSLKVMESWLKRAGFAEVSCIDISLTTPGEQRKTDWIQTESLDDFLDPRDRSRTVEGYPAPVRAVFTARAI</sequence>
<evidence type="ECO:0000255" key="1">
    <source>
        <dbReference type="HAMAP-Rule" id="MF_01590"/>
    </source>
</evidence>
<name>CMOB_DESAH</name>
<keyword id="KW-1185">Reference proteome</keyword>
<keyword id="KW-0808">Transferase</keyword>
<keyword id="KW-0819">tRNA processing</keyword>
<comment type="function">
    <text evidence="1">Catalyzes carboxymethyl transfer from carboxy-S-adenosyl-L-methionine (Cx-SAM) to 5-hydroxyuridine (ho5U) to form 5-carboxymethoxyuridine (cmo5U) at position 34 in tRNAs.</text>
</comment>
<comment type="catalytic activity">
    <reaction evidence="1">
        <text>carboxy-S-adenosyl-L-methionine + 5-hydroxyuridine(34) in tRNA = 5-carboxymethoxyuridine(34) in tRNA + S-adenosyl-L-homocysteine + H(+)</text>
        <dbReference type="Rhea" id="RHEA:52848"/>
        <dbReference type="Rhea" id="RHEA-COMP:13381"/>
        <dbReference type="Rhea" id="RHEA-COMP:13383"/>
        <dbReference type="ChEBI" id="CHEBI:15378"/>
        <dbReference type="ChEBI" id="CHEBI:57856"/>
        <dbReference type="ChEBI" id="CHEBI:134278"/>
        <dbReference type="ChEBI" id="CHEBI:136877"/>
        <dbReference type="ChEBI" id="CHEBI:136879"/>
    </reaction>
</comment>
<comment type="subunit">
    <text evidence="1">Homotetramer.</text>
</comment>
<comment type="similarity">
    <text evidence="1">Belongs to the class I-like SAM-binding methyltransferase superfamily. CmoB family.</text>
</comment>
<protein>
    <recommendedName>
        <fullName evidence="1">tRNA U34 carboxymethyltransferase</fullName>
        <ecNumber evidence="1">2.5.1.-</ecNumber>
    </recommendedName>
</protein>
<proteinExistence type="inferred from homology"/>